<evidence type="ECO:0000255" key="1">
    <source>
        <dbReference type="HAMAP-Rule" id="MF_00006"/>
    </source>
</evidence>
<evidence type="ECO:0000305" key="2"/>
<dbReference type="EC" id="4.3.2.1" evidence="1"/>
<dbReference type="EMBL" id="CP000916">
    <property type="protein sequence ID" value="ACM23359.1"/>
    <property type="molecule type" value="Genomic_DNA"/>
</dbReference>
<dbReference type="EMBL" id="AJ009897">
    <property type="protein sequence ID" value="CAB38108.1"/>
    <property type="molecule type" value="Genomic_DNA"/>
</dbReference>
<dbReference type="RefSeq" id="WP_015919674.1">
    <property type="nucleotide sequence ID" value="NC_011978.1"/>
</dbReference>
<dbReference type="SMR" id="Q9Z4S3"/>
<dbReference type="STRING" id="309803.CTN_1183"/>
<dbReference type="KEGG" id="tna:CTN_1183"/>
<dbReference type="eggNOG" id="COG0165">
    <property type="taxonomic scope" value="Bacteria"/>
</dbReference>
<dbReference type="HOGENOM" id="CLU_027272_2_0_0"/>
<dbReference type="UniPathway" id="UPA00068">
    <property type="reaction ID" value="UER00114"/>
</dbReference>
<dbReference type="Proteomes" id="UP000000445">
    <property type="component" value="Chromosome"/>
</dbReference>
<dbReference type="GO" id="GO:0005829">
    <property type="term" value="C:cytosol"/>
    <property type="evidence" value="ECO:0007669"/>
    <property type="project" value="TreeGrafter"/>
</dbReference>
<dbReference type="GO" id="GO:0004056">
    <property type="term" value="F:argininosuccinate lyase activity"/>
    <property type="evidence" value="ECO:0007669"/>
    <property type="project" value="UniProtKB-UniRule"/>
</dbReference>
<dbReference type="GO" id="GO:0042450">
    <property type="term" value="P:arginine biosynthetic process via ornithine"/>
    <property type="evidence" value="ECO:0007669"/>
    <property type="project" value="InterPro"/>
</dbReference>
<dbReference type="GO" id="GO:0006526">
    <property type="term" value="P:L-arginine biosynthetic process"/>
    <property type="evidence" value="ECO:0007669"/>
    <property type="project" value="UniProtKB-UniRule"/>
</dbReference>
<dbReference type="CDD" id="cd01359">
    <property type="entry name" value="Argininosuccinate_lyase"/>
    <property type="match status" value="1"/>
</dbReference>
<dbReference type="Gene3D" id="1.10.40.30">
    <property type="entry name" value="Fumarase/aspartase (C-terminal domain)"/>
    <property type="match status" value="1"/>
</dbReference>
<dbReference type="Gene3D" id="1.20.200.10">
    <property type="entry name" value="Fumarase/aspartase (Central domain)"/>
    <property type="match status" value="1"/>
</dbReference>
<dbReference type="Gene3D" id="1.10.275.10">
    <property type="entry name" value="Fumarase/aspartase (N-terminal domain)"/>
    <property type="match status" value="1"/>
</dbReference>
<dbReference type="HAMAP" id="MF_00006">
    <property type="entry name" value="Arg_succ_lyase"/>
    <property type="match status" value="1"/>
</dbReference>
<dbReference type="InterPro" id="IPR009049">
    <property type="entry name" value="Argininosuccinate_lyase"/>
</dbReference>
<dbReference type="InterPro" id="IPR024083">
    <property type="entry name" value="Fumarase/histidase_N"/>
</dbReference>
<dbReference type="InterPro" id="IPR020557">
    <property type="entry name" value="Fumarate_lyase_CS"/>
</dbReference>
<dbReference type="InterPro" id="IPR000362">
    <property type="entry name" value="Fumarate_lyase_fam"/>
</dbReference>
<dbReference type="InterPro" id="IPR022761">
    <property type="entry name" value="Fumarate_lyase_N"/>
</dbReference>
<dbReference type="InterPro" id="IPR008948">
    <property type="entry name" value="L-Aspartase-like"/>
</dbReference>
<dbReference type="NCBIfam" id="TIGR00838">
    <property type="entry name" value="argH"/>
    <property type="match status" value="1"/>
</dbReference>
<dbReference type="PANTHER" id="PTHR43814">
    <property type="entry name" value="ARGININOSUCCINATE LYASE"/>
    <property type="match status" value="1"/>
</dbReference>
<dbReference type="PANTHER" id="PTHR43814:SF1">
    <property type="entry name" value="ARGININOSUCCINATE LYASE"/>
    <property type="match status" value="1"/>
</dbReference>
<dbReference type="Pfam" id="PF00206">
    <property type="entry name" value="Lyase_1"/>
    <property type="match status" value="1"/>
</dbReference>
<dbReference type="PRINTS" id="PR00145">
    <property type="entry name" value="ARGSUCLYASE"/>
</dbReference>
<dbReference type="PRINTS" id="PR00149">
    <property type="entry name" value="FUMRATELYASE"/>
</dbReference>
<dbReference type="SUPFAM" id="SSF48557">
    <property type="entry name" value="L-aspartase-like"/>
    <property type="match status" value="1"/>
</dbReference>
<dbReference type="PROSITE" id="PS00163">
    <property type="entry name" value="FUMARATE_LYASES"/>
    <property type="match status" value="1"/>
</dbReference>
<name>ARLY_THENN</name>
<keyword id="KW-0028">Amino-acid biosynthesis</keyword>
<keyword id="KW-0055">Arginine biosynthesis</keyword>
<keyword id="KW-0963">Cytoplasm</keyword>
<keyword id="KW-0456">Lyase</keyword>
<comment type="catalytic activity">
    <reaction evidence="1">
        <text>2-(N(omega)-L-arginino)succinate = fumarate + L-arginine</text>
        <dbReference type="Rhea" id="RHEA:24020"/>
        <dbReference type="ChEBI" id="CHEBI:29806"/>
        <dbReference type="ChEBI" id="CHEBI:32682"/>
        <dbReference type="ChEBI" id="CHEBI:57472"/>
        <dbReference type="EC" id="4.3.2.1"/>
    </reaction>
</comment>
<comment type="pathway">
    <text evidence="1">Amino-acid biosynthesis; L-arginine biosynthesis; L-arginine from L-ornithine and carbamoyl phosphate: step 3/3.</text>
</comment>
<comment type="subcellular location">
    <subcellularLocation>
        <location evidence="1">Cytoplasm</location>
    </subcellularLocation>
</comment>
<comment type="similarity">
    <text evidence="1">Belongs to the lyase 1 family. Argininosuccinate lyase subfamily.</text>
</comment>
<accession>Q9Z4S3</accession>
<accession>B9K8S6</accession>
<sequence>MSEKLWEKGYTVDEEVEKFTVGDDYIVDMRIIKYDIKASIVHSKMLQRTGLLTQEEQKKIEEALNELLHLVEEGKFQIKPEDEDCHTAIENFLVKKLGETGKKIHTARSRNDQVLTALRLMYKDELKKIKDLVVELQKSLDGFIERFGQIKFAGFTHTRKAMPTDFATWAGALRDALQDDLKLLETVYDIIDQSPLGTGAGYGVPIEVDREFTAKELGFSRVQWNPIYTQNSRGKFEYLLLHVLSQISYDLNRFASDIIFFSLPEIGFLKLPKELCTGSSIMPHKINPDPLELVRAYHHFVVSRMVMAVSLPSNLILGYHRDLQLLKKPVIESIDVVKNILRIMKIIFDRIEVDREKSEDSITEEVLATHRVYELVKKGIPFRDAYRMVAEKYGREKD</sequence>
<proteinExistence type="inferred from homology"/>
<feature type="chain" id="PRO_0000137842" description="Argininosuccinate lyase">
    <location>
        <begin position="1"/>
        <end position="398"/>
    </location>
</feature>
<feature type="sequence conflict" description="In Ref. 2; CAB38108." evidence="2" ref="2">
    <original>G</original>
    <variation>S</variation>
    <location>
        <position position="171"/>
    </location>
</feature>
<gene>
    <name evidence="1" type="primary">argH</name>
    <name type="ordered locus">CTN_1183</name>
</gene>
<protein>
    <recommendedName>
        <fullName evidence="1">Argininosuccinate lyase</fullName>
        <shortName evidence="1">ASAL</shortName>
        <ecNumber evidence="1">4.3.2.1</ecNumber>
    </recommendedName>
    <alternativeName>
        <fullName evidence="1">Arginosuccinase</fullName>
    </alternativeName>
</protein>
<reference key="1">
    <citation type="submission" date="2007-11" db="EMBL/GenBank/DDBJ databases">
        <title>The genome sequence of the hyperthermophilic bacterium Thermotoga neapolitana.</title>
        <authorList>
            <person name="Lim S.K."/>
            <person name="Kim J.S."/>
            <person name="Cha S.H."/>
            <person name="Park B.C."/>
            <person name="Lee D.S."/>
            <person name="Tae H.S."/>
            <person name="Kim S.-J."/>
            <person name="Kim J.J."/>
            <person name="Park K.J."/>
            <person name="Lee S.Y."/>
        </authorList>
    </citation>
    <scope>NUCLEOTIDE SEQUENCE [LARGE SCALE GENOMIC DNA]</scope>
    <source>
        <strain>ATCC 49049 / DSM 4359 / NBRC 107923 / NS-E</strain>
    </source>
</reference>
<reference key="2">
    <citation type="journal article" date="2000" name="Mol. Gen. Genet.">
        <title>Thermostability, oligomerization and DNA-binding properties of the regulatory protein ArgR from the hyperthermophilic bacterium Thermotoga neapolitana.</title>
        <authorList>
            <person name="Dimova D."/>
            <person name="Weigel P."/>
            <person name="Takahashi M."/>
            <person name="Marc F."/>
            <person name="Van Duyne G.D."/>
            <person name="Sakanyan V."/>
        </authorList>
    </citation>
    <scope>NUCLEOTIDE SEQUENCE [GENOMIC DNA] OF 115-398</scope>
</reference>
<organism>
    <name type="scientific">Thermotoga neapolitana (strain ATCC 49049 / DSM 4359 / NBRC 107923 / NS-E)</name>
    <dbReference type="NCBI Taxonomy" id="309803"/>
    <lineage>
        <taxon>Bacteria</taxon>
        <taxon>Thermotogati</taxon>
        <taxon>Thermotogota</taxon>
        <taxon>Thermotogae</taxon>
        <taxon>Thermotogales</taxon>
        <taxon>Thermotogaceae</taxon>
        <taxon>Thermotoga</taxon>
    </lineage>
</organism>